<organism>
    <name type="scientific">African swine fever virus (isolate Warthog/Namibia/Wart80/1980)</name>
    <name type="common">ASFV</name>
    <dbReference type="NCBI Taxonomy" id="561444"/>
    <lineage>
        <taxon>Viruses</taxon>
        <taxon>Varidnaviria</taxon>
        <taxon>Bamfordvirae</taxon>
        <taxon>Nucleocytoviricota</taxon>
        <taxon>Pokkesviricetes</taxon>
        <taxon>Asfuvirales</taxon>
        <taxon>Asfarviridae</taxon>
        <taxon>Asfivirus</taxon>
        <taxon>African swine fever virus</taxon>
    </lineage>
</organism>
<accession>P0CAC0</accession>
<sequence length="257" mass="29777">MYSVCDVVRDAVAQSHLCACPNDKLPQCKGVTKAPPECSVFHVAKLQDTKFKWKYTLDPLKAQKLSQINKDIEKDAITLKLLYGIELSPEDLEWWKMQRCLINKKTGAKGGQFANKYLERQDLELLGYSPTPIIGGDFMFTALPDKVLRTIPIAWDRFLNPAMMIFFLIILLCVILGIFYVLVRNTLRRKQKIKQHQMEIKRFIKEKEQDPYIHTSFESWPADPNKEWKELIPVYEAQGYCMADYRKKLGMPPGPNC</sequence>
<organismHost>
    <name type="scientific">Ornithodoros</name>
    <name type="common">relapsing fever ticks</name>
    <dbReference type="NCBI Taxonomy" id="6937"/>
</organismHost>
<organismHost>
    <name type="scientific">Phacochoerus aethiopicus</name>
    <name type="common">Warthog</name>
    <dbReference type="NCBI Taxonomy" id="85517"/>
</organismHost>
<organismHost>
    <name type="scientific">Phacochoerus africanus</name>
    <name type="common">Warthog</name>
    <dbReference type="NCBI Taxonomy" id="41426"/>
</organismHost>
<organismHost>
    <name type="scientific">Potamochoerus larvatus</name>
    <name type="common">Bushpig</name>
    <dbReference type="NCBI Taxonomy" id="273792"/>
</organismHost>
<organismHost>
    <name type="scientific">Sus scrofa</name>
    <name type="common">Pig</name>
    <dbReference type="NCBI Taxonomy" id="9823"/>
</organismHost>
<name>VF257_ASFWA</name>
<feature type="chain" id="PRO_0000373618" description="Transmembrane protein C257L">
    <location>
        <begin position="1"/>
        <end position="257"/>
    </location>
</feature>
<feature type="transmembrane region" description="Helical" evidence="2">
    <location>
        <begin position="123"/>
        <end position="143"/>
    </location>
</feature>
<feature type="transmembrane region" description="Helical" evidence="2">
    <location>
        <begin position="163"/>
        <end position="183"/>
    </location>
</feature>
<keyword id="KW-1043">Host membrane</keyword>
<keyword id="KW-0426">Late protein</keyword>
<keyword id="KW-0472">Membrane</keyword>
<keyword id="KW-0812">Transmembrane</keyword>
<keyword id="KW-1133">Transmembrane helix</keyword>
<keyword id="KW-0946">Virion</keyword>
<gene>
    <name type="ordered locus">War-076</name>
</gene>
<protein>
    <recommendedName>
        <fullName>Transmembrane protein C257L</fullName>
        <shortName>pC257L</shortName>
    </recommendedName>
</protein>
<reference key="1">
    <citation type="submission" date="2003-03" db="EMBL/GenBank/DDBJ databases">
        <title>African swine fever virus genomes.</title>
        <authorList>
            <person name="Kutish G.F."/>
            <person name="Rock D.L."/>
        </authorList>
    </citation>
    <scope>NUCLEOTIDE SEQUENCE [LARGE SCALE GENOMIC DNA]</scope>
</reference>
<comment type="subcellular location">
    <subcellularLocation>
        <location evidence="3">Host membrane</location>
        <topology evidence="3">Multi-pass membrane protein</topology>
    </subcellularLocation>
    <subcellularLocation>
        <location evidence="1">Virion</location>
    </subcellularLocation>
</comment>
<comment type="induction">
    <text evidence="3">Expressed in the late phase of the viral replicative cycle.</text>
</comment>
<comment type="similarity">
    <text evidence="3">Belongs to the asfivirus C257R family.</text>
</comment>
<dbReference type="EMBL" id="AY261366">
    <property type="status" value="NOT_ANNOTATED_CDS"/>
    <property type="molecule type" value="Genomic_DNA"/>
</dbReference>
<dbReference type="SMR" id="P0CAC0"/>
<dbReference type="Proteomes" id="UP000000858">
    <property type="component" value="Segment"/>
</dbReference>
<dbReference type="GO" id="GO:0033644">
    <property type="term" value="C:host cell membrane"/>
    <property type="evidence" value="ECO:0007669"/>
    <property type="project" value="UniProtKB-SubCell"/>
</dbReference>
<dbReference type="GO" id="GO:0016020">
    <property type="term" value="C:membrane"/>
    <property type="evidence" value="ECO:0007669"/>
    <property type="project" value="UniProtKB-KW"/>
</dbReference>
<dbReference type="GO" id="GO:0044423">
    <property type="term" value="C:virion component"/>
    <property type="evidence" value="ECO:0007669"/>
    <property type="project" value="UniProtKB-KW"/>
</dbReference>
<evidence type="ECO:0000250" key="1">
    <source>
        <dbReference type="UniProtKB" id="Q65158"/>
    </source>
</evidence>
<evidence type="ECO:0000255" key="2"/>
<evidence type="ECO:0000305" key="3"/>
<proteinExistence type="inferred from homology"/>